<evidence type="ECO:0000255" key="1">
    <source>
        <dbReference type="HAMAP-Rule" id="MF_00473"/>
    </source>
</evidence>
<keyword id="KW-0963">Cytoplasm</keyword>
<keyword id="KW-0312">Gluconeogenesis</keyword>
<keyword id="KW-0324">Glycolysis</keyword>
<keyword id="KW-0413">Isomerase</keyword>
<organism>
    <name type="scientific">Clostridium botulinum (strain Eklund 17B / Type B)</name>
    <dbReference type="NCBI Taxonomy" id="935198"/>
    <lineage>
        <taxon>Bacteria</taxon>
        <taxon>Bacillati</taxon>
        <taxon>Bacillota</taxon>
        <taxon>Clostridia</taxon>
        <taxon>Eubacteriales</taxon>
        <taxon>Clostridiaceae</taxon>
        <taxon>Clostridium</taxon>
    </lineage>
</organism>
<protein>
    <recommendedName>
        <fullName evidence="1">Glucose-6-phosphate isomerase</fullName>
        <shortName evidence="1">GPI</shortName>
        <ecNumber evidence="1">5.3.1.9</ecNumber>
    </recommendedName>
    <alternativeName>
        <fullName evidence="1">Phosphoglucose isomerase</fullName>
        <shortName evidence="1">PGI</shortName>
    </alternativeName>
    <alternativeName>
        <fullName evidence="1">Phosphohexose isomerase</fullName>
        <shortName evidence="1">PHI</shortName>
    </alternativeName>
</protein>
<feature type="chain" id="PRO_1000125708" description="Glucose-6-phosphate isomerase">
    <location>
        <begin position="1"/>
        <end position="449"/>
    </location>
</feature>
<feature type="active site" description="Proton donor" evidence="1">
    <location>
        <position position="291"/>
    </location>
</feature>
<feature type="active site" evidence="1">
    <location>
        <position position="312"/>
    </location>
</feature>
<feature type="active site" evidence="1">
    <location>
        <position position="426"/>
    </location>
</feature>
<dbReference type="EC" id="5.3.1.9" evidence="1"/>
<dbReference type="EMBL" id="CP001056">
    <property type="protein sequence ID" value="ACD23777.1"/>
    <property type="molecule type" value="Genomic_DNA"/>
</dbReference>
<dbReference type="SMR" id="B2TIZ1"/>
<dbReference type="KEGG" id="cbk:CLL_A0403"/>
<dbReference type="HOGENOM" id="CLU_037303_0_1_9"/>
<dbReference type="UniPathway" id="UPA00109">
    <property type="reaction ID" value="UER00181"/>
</dbReference>
<dbReference type="UniPathway" id="UPA00138"/>
<dbReference type="Proteomes" id="UP000001195">
    <property type="component" value="Chromosome"/>
</dbReference>
<dbReference type="GO" id="GO:0005829">
    <property type="term" value="C:cytosol"/>
    <property type="evidence" value="ECO:0007669"/>
    <property type="project" value="TreeGrafter"/>
</dbReference>
<dbReference type="GO" id="GO:0097367">
    <property type="term" value="F:carbohydrate derivative binding"/>
    <property type="evidence" value="ECO:0007669"/>
    <property type="project" value="InterPro"/>
</dbReference>
<dbReference type="GO" id="GO:0004347">
    <property type="term" value="F:glucose-6-phosphate isomerase activity"/>
    <property type="evidence" value="ECO:0007669"/>
    <property type="project" value="UniProtKB-UniRule"/>
</dbReference>
<dbReference type="GO" id="GO:0048029">
    <property type="term" value="F:monosaccharide binding"/>
    <property type="evidence" value="ECO:0007669"/>
    <property type="project" value="TreeGrafter"/>
</dbReference>
<dbReference type="GO" id="GO:0006094">
    <property type="term" value="P:gluconeogenesis"/>
    <property type="evidence" value="ECO:0007669"/>
    <property type="project" value="UniProtKB-UniRule"/>
</dbReference>
<dbReference type="GO" id="GO:0051156">
    <property type="term" value="P:glucose 6-phosphate metabolic process"/>
    <property type="evidence" value="ECO:0007669"/>
    <property type="project" value="TreeGrafter"/>
</dbReference>
<dbReference type="GO" id="GO:0006096">
    <property type="term" value="P:glycolytic process"/>
    <property type="evidence" value="ECO:0007669"/>
    <property type="project" value="UniProtKB-UniRule"/>
</dbReference>
<dbReference type="CDD" id="cd05015">
    <property type="entry name" value="SIS_PGI_1"/>
    <property type="match status" value="1"/>
</dbReference>
<dbReference type="CDD" id="cd05016">
    <property type="entry name" value="SIS_PGI_2"/>
    <property type="match status" value="1"/>
</dbReference>
<dbReference type="FunFam" id="3.40.50.10490:FF:000015">
    <property type="entry name" value="Glucose-6-phosphate isomerase"/>
    <property type="match status" value="1"/>
</dbReference>
<dbReference type="FunFam" id="3.40.50.10490:FF:000016">
    <property type="entry name" value="Glucose-6-phosphate isomerase"/>
    <property type="match status" value="1"/>
</dbReference>
<dbReference type="Gene3D" id="3.40.50.10490">
    <property type="entry name" value="Glucose-6-phosphate isomerase like protein, domain 1"/>
    <property type="match status" value="2"/>
</dbReference>
<dbReference type="HAMAP" id="MF_00473">
    <property type="entry name" value="G6P_isomerase"/>
    <property type="match status" value="1"/>
</dbReference>
<dbReference type="InterPro" id="IPR001672">
    <property type="entry name" value="G6P_Isomerase"/>
</dbReference>
<dbReference type="InterPro" id="IPR018189">
    <property type="entry name" value="Phosphoglucose_isomerase_CS"/>
</dbReference>
<dbReference type="InterPro" id="IPR046348">
    <property type="entry name" value="SIS_dom_sf"/>
</dbReference>
<dbReference type="InterPro" id="IPR035476">
    <property type="entry name" value="SIS_PGI_1"/>
</dbReference>
<dbReference type="InterPro" id="IPR035482">
    <property type="entry name" value="SIS_PGI_2"/>
</dbReference>
<dbReference type="NCBIfam" id="NF010697">
    <property type="entry name" value="PRK14097.1"/>
    <property type="match status" value="1"/>
</dbReference>
<dbReference type="PANTHER" id="PTHR11469">
    <property type="entry name" value="GLUCOSE-6-PHOSPHATE ISOMERASE"/>
    <property type="match status" value="1"/>
</dbReference>
<dbReference type="PANTHER" id="PTHR11469:SF1">
    <property type="entry name" value="GLUCOSE-6-PHOSPHATE ISOMERASE"/>
    <property type="match status" value="1"/>
</dbReference>
<dbReference type="Pfam" id="PF00342">
    <property type="entry name" value="PGI"/>
    <property type="match status" value="1"/>
</dbReference>
<dbReference type="PRINTS" id="PR00662">
    <property type="entry name" value="G6PISOMERASE"/>
</dbReference>
<dbReference type="SUPFAM" id="SSF53697">
    <property type="entry name" value="SIS domain"/>
    <property type="match status" value="1"/>
</dbReference>
<dbReference type="PROSITE" id="PS00765">
    <property type="entry name" value="P_GLUCOSE_ISOMERASE_1"/>
    <property type="match status" value="1"/>
</dbReference>
<dbReference type="PROSITE" id="PS00174">
    <property type="entry name" value="P_GLUCOSE_ISOMERASE_2"/>
    <property type="match status" value="1"/>
</dbReference>
<dbReference type="PROSITE" id="PS51463">
    <property type="entry name" value="P_GLUCOSE_ISOMERASE_3"/>
    <property type="match status" value="1"/>
</dbReference>
<proteinExistence type="inferred from homology"/>
<reference key="1">
    <citation type="submission" date="2008-04" db="EMBL/GenBank/DDBJ databases">
        <title>Complete sequence of Clostridium botulinum strain Eklund.</title>
        <authorList>
            <person name="Brinkac L.M."/>
            <person name="Brown J.L."/>
            <person name="Bruce D."/>
            <person name="Detter C."/>
            <person name="Munk C."/>
            <person name="Smith L.A."/>
            <person name="Smith T.J."/>
            <person name="Sutton G."/>
            <person name="Brettin T.S."/>
        </authorList>
    </citation>
    <scope>NUCLEOTIDE SEQUENCE [LARGE SCALE GENOMIC DNA]</scope>
    <source>
        <strain>Eklund 17B / Type B</strain>
    </source>
</reference>
<gene>
    <name evidence="1" type="primary">pgi</name>
    <name type="ordered locus">CLL_A0403</name>
</gene>
<sequence>MKKGLTLDLSKTQAFVKDYELDYMEGMVKDSHDRLHSKTGQGNDFLGWIDLPVDYDKEEFARIKKAAEKIQSDSDVLIVIGIGGSYLGARAAIEMLTSNFHNVLDDNKRKVPKIFYAGNNISSTYMAELLEAIDGKDVSVNVISKSGTTTEPAIAFRIFKSYLEKKYGVEEARKRIYATTDKAKGALKGLADVEGYETFVIPDDVGGRFTVLTPVGLLPIAVAGINIDEMMQGAADAREAYSNPSLKENDCYKYAVTRNALYNKGKEIEVLVNYEPCIHYFNEWWKQLYGESEGKDKKGLFPAAVDFSTDLHSMGQYIQDGRRNLFETVINVEKARKEITIEFSEGDLDGLNFLTGKTMDFVNNKAFQGTLLAHNDGEVPNMVLNVPELSPYYFGHMVYFFEKACGISGYLLGINPFDQPGVEAYKKNMFALLGKPGYEDMKDELEKRL</sequence>
<accession>B2TIZ1</accession>
<comment type="function">
    <text evidence="1">Catalyzes the reversible isomerization of glucose-6-phosphate to fructose-6-phosphate.</text>
</comment>
<comment type="catalytic activity">
    <reaction evidence="1">
        <text>alpha-D-glucose 6-phosphate = beta-D-fructose 6-phosphate</text>
        <dbReference type="Rhea" id="RHEA:11816"/>
        <dbReference type="ChEBI" id="CHEBI:57634"/>
        <dbReference type="ChEBI" id="CHEBI:58225"/>
        <dbReference type="EC" id="5.3.1.9"/>
    </reaction>
</comment>
<comment type="pathway">
    <text evidence="1">Carbohydrate biosynthesis; gluconeogenesis.</text>
</comment>
<comment type="pathway">
    <text evidence="1">Carbohydrate degradation; glycolysis; D-glyceraldehyde 3-phosphate and glycerone phosphate from D-glucose: step 2/4.</text>
</comment>
<comment type="subcellular location">
    <subcellularLocation>
        <location evidence="1">Cytoplasm</location>
    </subcellularLocation>
</comment>
<comment type="similarity">
    <text evidence="1">Belongs to the GPI family.</text>
</comment>
<name>G6PI_CLOBB</name>